<protein>
    <recommendedName>
        <fullName evidence="1">Curved DNA-binding protein</fullName>
    </recommendedName>
</protein>
<feature type="chain" id="PRO_0000169993" description="Curved DNA-binding protein">
    <location>
        <begin position="1"/>
        <end position="306"/>
    </location>
</feature>
<feature type="domain" description="J" evidence="1">
    <location>
        <begin position="5"/>
        <end position="69"/>
    </location>
</feature>
<comment type="function">
    <text evidence="1">DNA-binding protein that preferentially recognizes a curved DNA sequence. It is probably a functional analog of DnaJ; displays overlapping activities with DnaJ, but functions under different conditions, probably acting as a molecular chaperone in an adaptive response to environmental stresses other than heat shock. Lacks autonomous chaperone activity; binds native substrates and targets them for recognition by DnaK. Its activity is inhibited by the binding of CbpM.</text>
</comment>
<comment type="subcellular location">
    <subcellularLocation>
        <location evidence="1">Cytoplasm</location>
        <location evidence="1">Nucleoid</location>
    </subcellularLocation>
</comment>
<name>CBPA_SALPA</name>
<reference key="1">
    <citation type="journal article" date="2004" name="Nat. Genet.">
        <title>Comparison of genome degradation in Paratyphi A and Typhi, human-restricted serovars of Salmonella enterica that cause typhoid.</title>
        <authorList>
            <person name="McClelland M."/>
            <person name="Sanderson K.E."/>
            <person name="Clifton S.W."/>
            <person name="Latreille P."/>
            <person name="Porwollik S."/>
            <person name="Sabo A."/>
            <person name="Meyer R."/>
            <person name="Bieri T."/>
            <person name="Ozersky P."/>
            <person name="McLellan M."/>
            <person name="Harkins C.R."/>
            <person name="Wang C."/>
            <person name="Nguyen C."/>
            <person name="Berghoff A."/>
            <person name="Elliott G."/>
            <person name="Kohlberg S."/>
            <person name="Strong C."/>
            <person name="Du F."/>
            <person name="Carter J."/>
            <person name="Kremizki C."/>
            <person name="Layman D."/>
            <person name="Leonard S."/>
            <person name="Sun H."/>
            <person name="Fulton L."/>
            <person name="Nash W."/>
            <person name="Miner T."/>
            <person name="Minx P."/>
            <person name="Delehaunty K."/>
            <person name="Fronick C."/>
            <person name="Magrini V."/>
            <person name="Nhan M."/>
            <person name="Warren W."/>
            <person name="Florea L."/>
            <person name="Spieth J."/>
            <person name="Wilson R.K."/>
        </authorList>
    </citation>
    <scope>NUCLEOTIDE SEQUENCE [LARGE SCALE GENOMIC DNA]</scope>
    <source>
        <strain>ATCC 9150 / SARB42</strain>
    </source>
</reference>
<evidence type="ECO:0000255" key="1">
    <source>
        <dbReference type="HAMAP-Rule" id="MF_01154"/>
    </source>
</evidence>
<proteinExistence type="inferred from homology"/>
<sequence>MELKDYYAIMGVKPTDDLKTIKTAYRRLARKYHPDVSKEPDAEARFKEVAEAWEVLSDEQRRAEYDQLWQHRNDPQFNRQFQQHEGQPYNAEDFDDIFSSIFGQHGRHSHHRHAARGHDIEIEVAVFLEETLEEHQRTISYSVPVYNAFGLVEREIPKTLNVKIPAGVSNGQRIRLKGQGTPGENGGPNGDLWLVIHIAPHPLFDIVNQDLEVVLPLAPWEAALGAKVSVPTLKERILLTIPPGSQAGQRLRIKGKGLASKKHTGDLYAIIKIVMPPKPDEKTAALWQQLADAQSSFDPRQQWGKA</sequence>
<keyword id="KW-0143">Chaperone</keyword>
<keyword id="KW-0963">Cytoplasm</keyword>
<keyword id="KW-0238">DNA-binding</keyword>
<gene>
    <name evidence="1" type="primary">cbpA</name>
    <name type="ordered locus">SPA1738</name>
</gene>
<organism>
    <name type="scientific">Salmonella paratyphi A (strain ATCC 9150 / SARB42)</name>
    <dbReference type="NCBI Taxonomy" id="295319"/>
    <lineage>
        <taxon>Bacteria</taxon>
        <taxon>Pseudomonadati</taxon>
        <taxon>Pseudomonadota</taxon>
        <taxon>Gammaproteobacteria</taxon>
        <taxon>Enterobacterales</taxon>
        <taxon>Enterobacteriaceae</taxon>
        <taxon>Salmonella</taxon>
    </lineage>
</organism>
<dbReference type="EMBL" id="CP000026">
    <property type="protein sequence ID" value="AAV77658.1"/>
    <property type="molecule type" value="Genomic_DNA"/>
</dbReference>
<dbReference type="RefSeq" id="WP_000420603.1">
    <property type="nucleotide sequence ID" value="NC_006511.1"/>
</dbReference>
<dbReference type="SMR" id="Q5PGA2"/>
<dbReference type="KEGG" id="spt:SPA1738"/>
<dbReference type="HOGENOM" id="CLU_017633_0_0_6"/>
<dbReference type="Proteomes" id="UP000008185">
    <property type="component" value="Chromosome"/>
</dbReference>
<dbReference type="GO" id="GO:0005737">
    <property type="term" value="C:cytoplasm"/>
    <property type="evidence" value="ECO:0007669"/>
    <property type="project" value="UniProtKB-UniRule"/>
</dbReference>
<dbReference type="GO" id="GO:0009295">
    <property type="term" value="C:nucleoid"/>
    <property type="evidence" value="ECO:0007669"/>
    <property type="project" value="UniProtKB-SubCell"/>
</dbReference>
<dbReference type="GO" id="GO:0003681">
    <property type="term" value="F:bent DNA binding"/>
    <property type="evidence" value="ECO:0007669"/>
    <property type="project" value="UniProtKB-UniRule"/>
</dbReference>
<dbReference type="GO" id="GO:0051082">
    <property type="term" value="F:unfolded protein binding"/>
    <property type="evidence" value="ECO:0007669"/>
    <property type="project" value="InterPro"/>
</dbReference>
<dbReference type="GO" id="GO:0051085">
    <property type="term" value="P:chaperone cofactor-dependent protein refolding"/>
    <property type="evidence" value="ECO:0007669"/>
    <property type="project" value="TreeGrafter"/>
</dbReference>
<dbReference type="GO" id="GO:0042026">
    <property type="term" value="P:protein refolding"/>
    <property type="evidence" value="ECO:0007669"/>
    <property type="project" value="TreeGrafter"/>
</dbReference>
<dbReference type="CDD" id="cd06257">
    <property type="entry name" value="DnaJ"/>
    <property type="match status" value="1"/>
</dbReference>
<dbReference type="CDD" id="cd10747">
    <property type="entry name" value="DnaJ_C"/>
    <property type="match status" value="1"/>
</dbReference>
<dbReference type="FunFam" id="1.10.287.110:FF:000013">
    <property type="entry name" value="Curved DNA-binding protein"/>
    <property type="match status" value="1"/>
</dbReference>
<dbReference type="FunFam" id="2.60.260.20:FF:000008">
    <property type="entry name" value="Curved DNA-binding protein"/>
    <property type="match status" value="1"/>
</dbReference>
<dbReference type="Gene3D" id="1.10.287.110">
    <property type="entry name" value="DnaJ domain"/>
    <property type="match status" value="1"/>
</dbReference>
<dbReference type="Gene3D" id="1.20.5.460">
    <property type="entry name" value="Single helix bin"/>
    <property type="match status" value="1"/>
</dbReference>
<dbReference type="Gene3D" id="2.60.260.20">
    <property type="entry name" value="Urease metallochaperone UreE, N-terminal domain"/>
    <property type="match status" value="2"/>
</dbReference>
<dbReference type="HAMAP" id="MF_01154">
    <property type="entry name" value="CbpA"/>
    <property type="match status" value="1"/>
</dbReference>
<dbReference type="InterPro" id="IPR023859">
    <property type="entry name" value="DNA-bd_curved-DNA"/>
</dbReference>
<dbReference type="InterPro" id="IPR002939">
    <property type="entry name" value="DnaJ_C"/>
</dbReference>
<dbReference type="InterPro" id="IPR001623">
    <property type="entry name" value="DnaJ_domain"/>
</dbReference>
<dbReference type="InterPro" id="IPR018253">
    <property type="entry name" value="DnaJ_domain_CS"/>
</dbReference>
<dbReference type="InterPro" id="IPR008971">
    <property type="entry name" value="HSP40/DnaJ_pept-bd"/>
</dbReference>
<dbReference type="InterPro" id="IPR036869">
    <property type="entry name" value="J_dom_sf"/>
</dbReference>
<dbReference type="NCBIfam" id="NF007618">
    <property type="entry name" value="PRK10266.1"/>
    <property type="match status" value="1"/>
</dbReference>
<dbReference type="PANTHER" id="PTHR43096">
    <property type="entry name" value="DNAJ HOMOLOG 1, MITOCHONDRIAL-RELATED"/>
    <property type="match status" value="1"/>
</dbReference>
<dbReference type="PANTHER" id="PTHR43096:SF52">
    <property type="entry name" value="DNAJ HOMOLOG 1, MITOCHONDRIAL-RELATED"/>
    <property type="match status" value="1"/>
</dbReference>
<dbReference type="Pfam" id="PF00226">
    <property type="entry name" value="DnaJ"/>
    <property type="match status" value="1"/>
</dbReference>
<dbReference type="Pfam" id="PF01556">
    <property type="entry name" value="DnaJ_C"/>
    <property type="match status" value="1"/>
</dbReference>
<dbReference type="PRINTS" id="PR00625">
    <property type="entry name" value="JDOMAIN"/>
</dbReference>
<dbReference type="SMART" id="SM00271">
    <property type="entry name" value="DnaJ"/>
    <property type="match status" value="1"/>
</dbReference>
<dbReference type="SUPFAM" id="SSF46565">
    <property type="entry name" value="Chaperone J-domain"/>
    <property type="match status" value="1"/>
</dbReference>
<dbReference type="SUPFAM" id="SSF49493">
    <property type="entry name" value="HSP40/DnaJ peptide-binding domain"/>
    <property type="match status" value="2"/>
</dbReference>
<dbReference type="PROSITE" id="PS00636">
    <property type="entry name" value="DNAJ_1"/>
    <property type="match status" value="1"/>
</dbReference>
<dbReference type="PROSITE" id="PS50076">
    <property type="entry name" value="DNAJ_2"/>
    <property type="match status" value="1"/>
</dbReference>
<accession>Q5PGA2</accession>